<evidence type="ECO:0000250" key="1">
    <source>
        <dbReference type="UniProtKB" id="P02144"/>
    </source>
</evidence>
<evidence type="ECO:0000250" key="2">
    <source>
        <dbReference type="UniProtKB" id="P02185"/>
    </source>
</evidence>
<evidence type="ECO:0000255" key="3">
    <source>
        <dbReference type="PROSITE-ProRule" id="PRU00238"/>
    </source>
</evidence>
<evidence type="ECO:0000269" key="4">
    <source>
    </source>
</evidence>
<protein>
    <recommendedName>
        <fullName>Myoglobin</fullName>
    </recommendedName>
    <alternativeName>
        <fullName evidence="1">Nitrite reductase MB</fullName>
        <ecNumber evidence="1">1.7.-.-</ecNumber>
    </alternativeName>
    <alternativeName>
        <fullName evidence="1">Pseudoperoxidase MB</fullName>
        <ecNumber evidence="1">1.11.1.-</ecNumber>
    </alternativeName>
</protein>
<dbReference type="EC" id="1.7.-.-" evidence="1"/>
<dbReference type="EC" id="1.11.1.-" evidence="1"/>
<dbReference type="iPTMnet" id="P14398"/>
<dbReference type="GO" id="GO:0070062">
    <property type="term" value="C:extracellular exosome"/>
    <property type="evidence" value="ECO:0007669"/>
    <property type="project" value="TreeGrafter"/>
</dbReference>
<dbReference type="GO" id="GO:0016528">
    <property type="term" value="C:sarcoplasm"/>
    <property type="evidence" value="ECO:0000250"/>
    <property type="project" value="UniProtKB"/>
</dbReference>
<dbReference type="GO" id="GO:0020037">
    <property type="term" value="F:heme binding"/>
    <property type="evidence" value="ECO:0007669"/>
    <property type="project" value="InterPro"/>
</dbReference>
<dbReference type="GO" id="GO:0046872">
    <property type="term" value="F:metal ion binding"/>
    <property type="evidence" value="ECO:0007669"/>
    <property type="project" value="UniProtKB-KW"/>
</dbReference>
<dbReference type="GO" id="GO:0098809">
    <property type="term" value="F:nitrite reductase activity"/>
    <property type="evidence" value="ECO:0000250"/>
    <property type="project" value="UniProtKB"/>
</dbReference>
<dbReference type="GO" id="GO:0019825">
    <property type="term" value="F:oxygen binding"/>
    <property type="evidence" value="ECO:0007669"/>
    <property type="project" value="InterPro"/>
</dbReference>
<dbReference type="GO" id="GO:0005344">
    <property type="term" value="F:oxygen carrier activity"/>
    <property type="evidence" value="ECO:0000250"/>
    <property type="project" value="UniProtKB"/>
</dbReference>
<dbReference type="GO" id="GO:0004601">
    <property type="term" value="F:peroxidase activity"/>
    <property type="evidence" value="ECO:0000250"/>
    <property type="project" value="UniProtKB"/>
</dbReference>
<dbReference type="GO" id="GO:0019430">
    <property type="term" value="P:removal of superoxide radicals"/>
    <property type="evidence" value="ECO:0000250"/>
    <property type="project" value="UniProtKB"/>
</dbReference>
<dbReference type="Gene3D" id="6.10.140.2100">
    <property type="match status" value="1"/>
</dbReference>
<dbReference type="Gene3D" id="6.10.140.2110">
    <property type="match status" value="1"/>
</dbReference>
<dbReference type="InterPro" id="IPR000971">
    <property type="entry name" value="Globin"/>
</dbReference>
<dbReference type="InterPro" id="IPR009050">
    <property type="entry name" value="Globin-like_sf"/>
</dbReference>
<dbReference type="InterPro" id="IPR002335">
    <property type="entry name" value="Myoglobin"/>
</dbReference>
<dbReference type="PANTHER" id="PTHR47132">
    <property type="entry name" value="MYOGLOBIN"/>
    <property type="match status" value="1"/>
</dbReference>
<dbReference type="PANTHER" id="PTHR47132:SF1">
    <property type="entry name" value="MYOGLOBIN"/>
    <property type="match status" value="1"/>
</dbReference>
<dbReference type="Pfam" id="PF00042">
    <property type="entry name" value="Globin"/>
    <property type="match status" value="1"/>
</dbReference>
<dbReference type="PRINTS" id="PR00613">
    <property type="entry name" value="MYOGLOBIN"/>
</dbReference>
<dbReference type="SUPFAM" id="SSF46458">
    <property type="entry name" value="Globin-like"/>
    <property type="match status" value="1"/>
</dbReference>
<dbReference type="PROSITE" id="PS01033">
    <property type="entry name" value="GLOBIN"/>
    <property type="match status" value="1"/>
</dbReference>
<sequence>MABWDKVNSVWSAVEQNITAIGQNILLRLFEQYPESEDYFPKLKNKSLGELKDTADIKAQADTVLRALGNIVKKKGDHSQPVKALAATHITTHKIPPHYFTKITTIAVGVLSEMYPSEMNAQAQAAFSGAFKNICSDIEKEYKAANFQG</sequence>
<reference key="1">
    <citation type="journal article" date="1985" name="Aust. J. Biol. Sci.">
        <title>Shark myoglobins. II. Isolation, characterization and amino acid sequence of myoglobin from Galeorhinus japonicus.</title>
        <authorList>
            <person name="Suzuki T."/>
            <person name="Suzuki T."/>
            <person name="Yata T."/>
        </authorList>
    </citation>
    <scope>PROTEIN SEQUENCE OF 2-149</scope>
    <scope>ACETYLATION AT ALA-2</scope>
</reference>
<name>MYG_HEMJP</name>
<feature type="initiator methionine" description="Removed" evidence="4">
    <location>
        <position position="1"/>
    </location>
</feature>
<feature type="chain" id="PRO_0000053297" description="Myoglobin">
    <location>
        <begin position="2"/>
        <end position="149"/>
    </location>
</feature>
<feature type="domain" description="Globin" evidence="3">
    <location>
        <begin position="2"/>
        <end position="143"/>
    </location>
</feature>
<feature type="binding site" description="proximal binding residue" evidence="1">
    <location>
        <position position="89"/>
    </location>
    <ligand>
        <name>heme b</name>
        <dbReference type="ChEBI" id="CHEBI:60344"/>
    </ligand>
    <ligandPart>
        <name>Fe</name>
        <dbReference type="ChEBI" id="CHEBI:18248"/>
    </ligandPart>
</feature>
<feature type="modified residue" description="N-acetylalanine" evidence="4">
    <location>
        <position position="2"/>
    </location>
</feature>
<proteinExistence type="evidence at protein level"/>
<organism>
    <name type="scientific">Hemitriakis japanica</name>
    <name type="common">Japanese topeshark</name>
    <name type="synonym">Galeus japanicus</name>
    <dbReference type="NCBI Taxonomy" id="376633"/>
    <lineage>
        <taxon>Eukaryota</taxon>
        <taxon>Metazoa</taxon>
        <taxon>Chordata</taxon>
        <taxon>Craniata</taxon>
        <taxon>Vertebrata</taxon>
        <taxon>Chondrichthyes</taxon>
        <taxon>Elasmobranchii</taxon>
        <taxon>Galeomorphii</taxon>
        <taxon>Galeoidea</taxon>
        <taxon>Carcharhiniformes</taxon>
        <taxon>Triakidae</taxon>
        <taxon>Hemitriakis</taxon>
    </lineage>
</organism>
<gene>
    <name type="primary">mb</name>
</gene>
<comment type="function">
    <text evidence="1">Monomeric heme protein which primary function is to store oxygen and facilitate its diffusion within muscle tissues. Reversibly binds oxygen through a pentacoordinated heme iron and enables its timely and efficient release as needed during periods of heightened demand. Depending on the oxidative conditions of tissues and cells, and in addition to its ability to bind oxygen, it also has a nitrite reductase activity whereby it regulates the production of bioactive nitric oxide. Under stress conditions, like hypoxia and anoxia, it also protects cells against reactive oxygen species thanks to its pseudoperoxidase activity.</text>
</comment>
<comment type="catalytic activity">
    <reaction evidence="1">
        <text>Fe(III)-heme b-[protein] + nitric oxide + H2O = Fe(II)-heme b-[protein] + nitrite + 2 H(+)</text>
        <dbReference type="Rhea" id="RHEA:77711"/>
        <dbReference type="Rhea" id="RHEA-COMP:18975"/>
        <dbReference type="Rhea" id="RHEA-COMP:18976"/>
        <dbReference type="ChEBI" id="CHEBI:15377"/>
        <dbReference type="ChEBI" id="CHEBI:15378"/>
        <dbReference type="ChEBI" id="CHEBI:16301"/>
        <dbReference type="ChEBI" id="CHEBI:16480"/>
        <dbReference type="ChEBI" id="CHEBI:55376"/>
        <dbReference type="ChEBI" id="CHEBI:60344"/>
    </reaction>
    <physiologicalReaction direction="right-to-left" evidence="1">
        <dbReference type="Rhea" id="RHEA:77713"/>
    </physiologicalReaction>
</comment>
<comment type="catalytic activity">
    <reaction evidence="1">
        <text>H2O2 + AH2 = A + 2 H2O</text>
        <dbReference type="Rhea" id="RHEA:30275"/>
        <dbReference type="ChEBI" id="CHEBI:13193"/>
        <dbReference type="ChEBI" id="CHEBI:15377"/>
        <dbReference type="ChEBI" id="CHEBI:16240"/>
        <dbReference type="ChEBI" id="CHEBI:17499"/>
    </reaction>
</comment>
<comment type="subunit">
    <text evidence="2">Monomeric.</text>
</comment>
<comment type="subcellular location">
    <subcellularLocation>
        <location evidence="1">Cytoplasm</location>
        <location evidence="1">Sarcoplasm</location>
    </subcellularLocation>
</comment>
<comment type="similarity">
    <text evidence="3">Belongs to the globin family.</text>
</comment>
<keyword id="KW-0007">Acetylation</keyword>
<keyword id="KW-0963">Cytoplasm</keyword>
<keyword id="KW-0903">Direct protein sequencing</keyword>
<keyword id="KW-0349">Heme</keyword>
<keyword id="KW-0408">Iron</keyword>
<keyword id="KW-0479">Metal-binding</keyword>
<keyword id="KW-0514">Muscle protein</keyword>
<keyword id="KW-0560">Oxidoreductase</keyword>
<keyword id="KW-0561">Oxygen transport</keyword>
<keyword id="KW-0813">Transport</keyword>
<accession>P14398</accession>